<name>RL25_CHLPN</name>
<gene>
    <name evidence="1" type="primary">rplY</name>
    <name evidence="1" type="synonym">ctc</name>
    <name type="ordered locus">CPn_0949</name>
    <name type="ordered locus">CP_0910</name>
    <name type="ordered locus">CpB0986</name>
</gene>
<dbReference type="EMBL" id="AE001363">
    <property type="protein sequence ID" value="AAD19087.1"/>
    <property type="molecule type" value="Genomic_DNA"/>
</dbReference>
<dbReference type="EMBL" id="AE002161">
    <property type="protein sequence ID" value="AAF38695.1"/>
    <property type="molecule type" value="Genomic_DNA"/>
</dbReference>
<dbReference type="EMBL" id="BA000008">
    <property type="protein sequence ID" value="BAA99157.1"/>
    <property type="molecule type" value="Genomic_DNA"/>
</dbReference>
<dbReference type="EMBL" id="AE009440">
    <property type="protein sequence ID" value="AAP98915.1"/>
    <property type="molecule type" value="Genomic_DNA"/>
</dbReference>
<dbReference type="PIR" id="C86609">
    <property type="entry name" value="C86609"/>
</dbReference>
<dbReference type="PIR" id="D72014">
    <property type="entry name" value="D72014"/>
</dbReference>
<dbReference type="PIR" id="H81523">
    <property type="entry name" value="H81523"/>
</dbReference>
<dbReference type="RefSeq" id="NP_225144.1">
    <property type="nucleotide sequence ID" value="NC_000922.1"/>
</dbReference>
<dbReference type="RefSeq" id="WP_010883584.1">
    <property type="nucleotide sequence ID" value="NZ_LN847257.1"/>
</dbReference>
<dbReference type="RefSeq" id="WP_010892216.1">
    <property type="nucleotide sequence ID" value="NZ_LN846995.1"/>
</dbReference>
<dbReference type="SMR" id="Q9Z6V7"/>
<dbReference type="STRING" id="406984.CPK_ORF00364"/>
<dbReference type="GeneID" id="45051006"/>
<dbReference type="KEGG" id="cpa:CP_0910"/>
<dbReference type="KEGG" id="cpj:ctc"/>
<dbReference type="KEGG" id="cpn:CPn_0949"/>
<dbReference type="KEGG" id="cpt:CpB0986"/>
<dbReference type="PATRIC" id="fig|115713.3.peg.1039"/>
<dbReference type="eggNOG" id="COG1825">
    <property type="taxonomic scope" value="Bacteria"/>
</dbReference>
<dbReference type="HOGENOM" id="CLU_075939_2_1_0"/>
<dbReference type="OrthoDB" id="17764at2"/>
<dbReference type="Proteomes" id="UP000000583">
    <property type="component" value="Chromosome"/>
</dbReference>
<dbReference type="Proteomes" id="UP000000801">
    <property type="component" value="Chromosome"/>
</dbReference>
<dbReference type="GO" id="GO:0022625">
    <property type="term" value="C:cytosolic large ribosomal subunit"/>
    <property type="evidence" value="ECO:0007669"/>
    <property type="project" value="TreeGrafter"/>
</dbReference>
<dbReference type="GO" id="GO:0008097">
    <property type="term" value="F:5S rRNA binding"/>
    <property type="evidence" value="ECO:0007669"/>
    <property type="project" value="InterPro"/>
</dbReference>
<dbReference type="GO" id="GO:0003735">
    <property type="term" value="F:structural constituent of ribosome"/>
    <property type="evidence" value="ECO:0007669"/>
    <property type="project" value="InterPro"/>
</dbReference>
<dbReference type="GO" id="GO:0006412">
    <property type="term" value="P:translation"/>
    <property type="evidence" value="ECO:0007669"/>
    <property type="project" value="UniProtKB-UniRule"/>
</dbReference>
<dbReference type="CDD" id="cd00495">
    <property type="entry name" value="Ribosomal_L25_TL5_CTC"/>
    <property type="match status" value="1"/>
</dbReference>
<dbReference type="Gene3D" id="2.170.120.20">
    <property type="entry name" value="Ribosomal protein L25, beta domain"/>
    <property type="match status" value="1"/>
</dbReference>
<dbReference type="Gene3D" id="2.40.240.10">
    <property type="entry name" value="Ribosomal Protein L25, Chain P"/>
    <property type="match status" value="1"/>
</dbReference>
<dbReference type="HAMAP" id="MF_01334">
    <property type="entry name" value="Ribosomal_bL25_CTC"/>
    <property type="match status" value="1"/>
</dbReference>
<dbReference type="InterPro" id="IPR020056">
    <property type="entry name" value="Rbsml_bL25/Gln-tRNA_synth_N"/>
</dbReference>
<dbReference type="InterPro" id="IPR011035">
    <property type="entry name" value="Ribosomal_bL25/Gln-tRNA_synth"/>
</dbReference>
<dbReference type="InterPro" id="IPR020057">
    <property type="entry name" value="Ribosomal_bL25_b-dom"/>
</dbReference>
<dbReference type="InterPro" id="IPR037121">
    <property type="entry name" value="Ribosomal_bL25_C"/>
</dbReference>
<dbReference type="InterPro" id="IPR001021">
    <property type="entry name" value="Ribosomal_bL25_long"/>
</dbReference>
<dbReference type="InterPro" id="IPR029751">
    <property type="entry name" value="Ribosomal_L25_dom"/>
</dbReference>
<dbReference type="InterPro" id="IPR020930">
    <property type="entry name" value="Ribosomal_uL5_bac-type"/>
</dbReference>
<dbReference type="NCBIfam" id="TIGR00731">
    <property type="entry name" value="bL25_bact_ctc"/>
    <property type="match status" value="1"/>
</dbReference>
<dbReference type="NCBIfam" id="NF004129">
    <property type="entry name" value="PRK05618.1-4"/>
    <property type="match status" value="1"/>
</dbReference>
<dbReference type="PANTHER" id="PTHR33284">
    <property type="entry name" value="RIBOSOMAL PROTEIN L25/GLN-TRNA SYNTHETASE, ANTI-CODON-BINDING DOMAIN-CONTAINING PROTEIN"/>
    <property type="match status" value="1"/>
</dbReference>
<dbReference type="PANTHER" id="PTHR33284:SF1">
    <property type="entry name" value="RIBOSOMAL PROTEIN L25_GLN-TRNA SYNTHETASE, ANTI-CODON-BINDING DOMAIN-CONTAINING PROTEIN"/>
    <property type="match status" value="1"/>
</dbReference>
<dbReference type="Pfam" id="PF01386">
    <property type="entry name" value="Ribosomal_L25p"/>
    <property type="match status" value="1"/>
</dbReference>
<dbReference type="Pfam" id="PF14693">
    <property type="entry name" value="Ribosomal_TL5_C"/>
    <property type="match status" value="1"/>
</dbReference>
<dbReference type="SUPFAM" id="SSF50715">
    <property type="entry name" value="Ribosomal protein L25-like"/>
    <property type="match status" value="1"/>
</dbReference>
<organism>
    <name type="scientific">Chlamydia pneumoniae</name>
    <name type="common">Chlamydophila pneumoniae</name>
    <dbReference type="NCBI Taxonomy" id="83558"/>
    <lineage>
        <taxon>Bacteria</taxon>
        <taxon>Pseudomonadati</taxon>
        <taxon>Chlamydiota</taxon>
        <taxon>Chlamydiia</taxon>
        <taxon>Chlamydiales</taxon>
        <taxon>Chlamydiaceae</taxon>
        <taxon>Chlamydia/Chlamydophila group</taxon>
        <taxon>Chlamydia</taxon>
    </lineage>
</organism>
<protein>
    <recommendedName>
        <fullName evidence="1">Large ribosomal subunit protein bL25</fullName>
    </recommendedName>
    <alternativeName>
        <fullName evidence="2">50S ribosomal protein L25</fullName>
    </alternativeName>
    <alternativeName>
        <fullName evidence="1">General stress protein CTC</fullName>
    </alternativeName>
</protein>
<proteinExistence type="inferred from homology"/>
<reference key="1">
    <citation type="journal article" date="1999" name="Nat. Genet.">
        <title>Comparative genomes of Chlamydia pneumoniae and C. trachomatis.</title>
        <authorList>
            <person name="Kalman S."/>
            <person name="Mitchell W.P."/>
            <person name="Marathe R."/>
            <person name="Lammel C.J."/>
            <person name="Fan J."/>
            <person name="Hyman R.W."/>
            <person name="Olinger L."/>
            <person name="Grimwood J."/>
            <person name="Davis R.W."/>
            <person name="Stephens R.S."/>
        </authorList>
    </citation>
    <scope>NUCLEOTIDE SEQUENCE [LARGE SCALE GENOMIC DNA]</scope>
    <source>
        <strain>CWL029</strain>
    </source>
</reference>
<reference key="2">
    <citation type="journal article" date="2000" name="Nucleic Acids Res.">
        <title>Genome sequences of Chlamydia trachomatis MoPn and Chlamydia pneumoniae AR39.</title>
        <authorList>
            <person name="Read T.D."/>
            <person name="Brunham R.C."/>
            <person name="Shen C."/>
            <person name="Gill S.R."/>
            <person name="Heidelberg J.F."/>
            <person name="White O."/>
            <person name="Hickey E.K."/>
            <person name="Peterson J.D."/>
            <person name="Utterback T.R."/>
            <person name="Berry K.J."/>
            <person name="Bass S."/>
            <person name="Linher K.D."/>
            <person name="Weidman J.F."/>
            <person name="Khouri H.M."/>
            <person name="Craven B."/>
            <person name="Bowman C."/>
            <person name="Dodson R.J."/>
            <person name="Gwinn M.L."/>
            <person name="Nelson W.C."/>
            <person name="DeBoy R.T."/>
            <person name="Kolonay J.F."/>
            <person name="McClarty G."/>
            <person name="Salzberg S.L."/>
            <person name="Eisen J.A."/>
            <person name="Fraser C.M."/>
        </authorList>
    </citation>
    <scope>NUCLEOTIDE SEQUENCE [LARGE SCALE GENOMIC DNA]</scope>
    <source>
        <strain>AR39</strain>
    </source>
</reference>
<reference key="3">
    <citation type="journal article" date="2000" name="Nucleic Acids Res.">
        <title>Comparison of whole genome sequences of Chlamydia pneumoniae J138 from Japan and CWL029 from USA.</title>
        <authorList>
            <person name="Shirai M."/>
            <person name="Hirakawa H."/>
            <person name="Kimoto M."/>
            <person name="Tabuchi M."/>
            <person name="Kishi F."/>
            <person name="Ouchi K."/>
            <person name="Shiba T."/>
            <person name="Ishii K."/>
            <person name="Hattori M."/>
            <person name="Kuhara S."/>
            <person name="Nakazawa T."/>
        </authorList>
    </citation>
    <scope>NUCLEOTIDE SEQUENCE [LARGE SCALE GENOMIC DNA]</scope>
    <source>
        <strain>J138</strain>
    </source>
</reference>
<reference key="4">
    <citation type="submission" date="2002-05" db="EMBL/GenBank/DDBJ databases">
        <title>The genome sequence of Chlamydia pneumoniae TW183 and comparison with other Chlamydia strains based on whole genome sequence analysis.</title>
        <authorList>
            <person name="Geng M.M."/>
            <person name="Schuhmacher A."/>
            <person name="Muehldorfer I."/>
            <person name="Bensch K.W."/>
            <person name="Schaefer K.P."/>
            <person name="Schneider S."/>
            <person name="Pohl T."/>
            <person name="Essig A."/>
            <person name="Marre R."/>
            <person name="Melchers K."/>
        </authorList>
    </citation>
    <scope>NUCLEOTIDE SEQUENCE [LARGE SCALE GENOMIC DNA]</scope>
    <source>
        <strain>TW-183</strain>
    </source>
</reference>
<keyword id="KW-0687">Ribonucleoprotein</keyword>
<keyword id="KW-0689">Ribosomal protein</keyword>
<keyword id="KW-0694">RNA-binding</keyword>
<keyword id="KW-0699">rRNA-binding</keyword>
<evidence type="ECO:0000255" key="1">
    <source>
        <dbReference type="HAMAP-Rule" id="MF_01334"/>
    </source>
</evidence>
<evidence type="ECO:0000305" key="2"/>
<feature type="chain" id="PRO_0000181534" description="Large ribosomal subunit protein bL25">
    <location>
        <begin position="1"/>
        <end position="185"/>
    </location>
</feature>
<feature type="sequence conflict" description="In Ref. 1; AAD19087." evidence="2" ref="1">
    <original>V</original>
    <variation>I</variation>
    <location>
        <position position="102"/>
    </location>
</feature>
<sequence length="185" mass="20425">MELVVTSRETGKKSFLKKIRQQGGIPAVVYSAGKSLANITVDALVFKKFLSNLESGALSSTVFSLSYEGRIIKALVKDIQYQITTYDVIHLDFEELVEDRPVKLNIPIRCINAVDCIGVKLGGSLRQVIRAVRVVCKPKDIVPFLELDVRSVGLSQTRKLSDIKIPAGIETITPLKEVAITVSRR</sequence>
<comment type="function">
    <text evidence="1">This is one of the proteins that binds to the 5S RNA in the ribosome where it forms part of the central protuberance.</text>
</comment>
<comment type="subunit">
    <text evidence="1">Part of the 50S ribosomal subunit; part of the 5S rRNA/L5/L18/L25 subcomplex. Contacts the 5S rRNA. Binds to the 5S rRNA independently of L5 and L18.</text>
</comment>
<comment type="similarity">
    <text evidence="1">Belongs to the bacterial ribosomal protein bL25 family. CTC subfamily.</text>
</comment>
<accession>Q9Z6V7</accession>
<accession>Q9JS47</accession>